<feature type="chain" id="PRO_0000438220" description="Probable tape measure protein">
    <location>
        <begin position="1"/>
        <end position="999"/>
    </location>
</feature>
<keyword id="KW-1188">Viral release from host cell</keyword>
<keyword id="KW-1245">Viral tail assembly</keyword>
<keyword id="KW-0946">Virion</keyword>
<sequence length="999" mass="104372">MASNATFEVEIYGNTTKFENSLKGVNTAMSGLRGEAKNLREALKLDPANTGKMAQLQKNLQTQLGLSRDKATKLKEELSTVDKGTSAGQKKWLQLTRDLGTVETQANRLEGEIKQVEGAISSGSWNIDAKMDTKGVNSGIDGMKSRFSGLREIAVGVFRQIGSSAVSAVGNGLKGWVSDAMDTQKAMISLQNTLKFKGNGQDFDYVSKSMQTLAKDTNANTEDTLKLSTTFIGLGDSAKTAVGKTEALVKANQAFGGTGEQLKGVVQAYGQMSASGKVSAENINQLTDNNTALGSALKSTVMEMNPALKQYGSFASASEKGAISVEMLDKAMQKLGGAGGGAVTTIGDAWDSFNETLSLALLPTLDALTPIISSIIDKMAGWGESAGKALDSIVKYVKELWGALEKNGALSSLSKIWDGLKSTFGSVLSIIGQLIESFAGIDLKTGESAGSVENVSKTIANLAKGLADVIKKIADFAKKFSESKGAIDTLKTSLVALTAGFVAFKIGSGIITAISAFKKLQTAIQAGTGVMGAFNAVMAINPFVALGIAIAAIVAGLVYFFTQTETGKKAWASFVDFLKSAWDGIVSFFSGIGQWFADIWNGAVDGAKGIWQGLVDWFSGIVQGVQNIWNGITTFFTTLWTTVVTGIQTAWAGVTGFFTGLWDGIVNVVTTVFTTISSLVTGAYNWFVTTFQPLISFYKSIFGLVGSVINLAFQLILAIIRGAYQLVIGAWSGISGFFGVIFNAVSSVVSTVFSAIGSFAGSAWNVLVGVWNAVAGFFGGIFNAVKGVVSSVFSAIGSFASSAWGVVSSIWSAVSGFFSGIFNAVSSVVSGVFSALGGFASNAWGAITGIFSGVADFFSGVFDGAKNIVSGVFEAFGNFASNAWNAITGVFNGIGSFFSDIFGGVKNTIDSVLGGVTDTINNIKGSIDWVASKVGGLFKGSMVVGLTDVNLSSSGYGLSTNSVSSDNRTYNTFNVQGGAGQDVSNLARAIRREFELGRA</sequence>
<organism>
    <name type="scientific">Lactococcus phage p2</name>
    <name type="common">Lactococcus lactis bacteriophage p2</name>
    <dbReference type="NCBI Taxonomy" id="254252"/>
    <lineage>
        <taxon>Viruses</taxon>
        <taxon>Duplodnaviria</taxon>
        <taxon>Heunggongvirae</taxon>
        <taxon>Uroviricota</taxon>
        <taxon>Caudoviricetes</taxon>
        <taxon>Skunavirus</taxon>
    </lineage>
</organism>
<reference key="1">
    <citation type="submission" date="2010-02" db="EMBL/GenBank/DDBJ databases">
        <title>Complete genomic sequence of Lactococcus lactis phage p2.</title>
        <authorList>
            <person name="Tremblay D.M."/>
            <person name="Deveau H."/>
            <person name="Moineau S."/>
        </authorList>
    </citation>
    <scope>NUCLEOTIDE SEQUENCE [LARGE SCALE GENOMIC DNA]</scope>
</reference>
<reference key="2">
    <citation type="journal article" date="2013" name="J. Virol.">
        <title>Structure, adsorption to host, and infection mechanism of virulent lactococcal phage p2.</title>
        <authorList>
            <person name="Bebeacua C."/>
            <person name="Tremblay D."/>
            <person name="Farenc C."/>
            <person name="Chapot-Chartier M.P."/>
            <person name="Sadovskaya I."/>
            <person name="van Heel M."/>
            <person name="Veesler D."/>
            <person name="Moineau S."/>
            <person name="Cambillau C."/>
        </authorList>
    </citation>
    <scope>STRUCTURE BY ELECTRON MICROSCOPY (22 ANGSTROMS) OF THE TAIL</scope>
    <scope>FUNCTION</scope>
    <scope>SUBCELLULAR LOCATION</scope>
</reference>
<dbReference type="EMBL" id="GQ979703">
    <property type="protein sequence ID" value="ADC80089.1"/>
    <property type="molecule type" value="Genomic_DNA"/>
</dbReference>
<dbReference type="RefSeq" id="YP_009613494.1">
    <property type="nucleotide sequence ID" value="NC_042024.1"/>
</dbReference>
<dbReference type="SMR" id="D3WAD2"/>
<dbReference type="GeneID" id="40089869"/>
<dbReference type="Proteomes" id="UP000002348">
    <property type="component" value="Segment"/>
</dbReference>
<dbReference type="GO" id="GO:0044423">
    <property type="term" value="C:virion component"/>
    <property type="evidence" value="ECO:0007669"/>
    <property type="project" value="UniProtKB-KW"/>
</dbReference>
<dbReference type="GO" id="GO:0098003">
    <property type="term" value="P:viral tail assembly"/>
    <property type="evidence" value="ECO:0007669"/>
    <property type="project" value="UniProtKB-KW"/>
</dbReference>
<dbReference type="Gene3D" id="1.20.120.20">
    <property type="entry name" value="Apolipoprotein"/>
    <property type="match status" value="2"/>
</dbReference>
<dbReference type="InterPro" id="IPR013491">
    <property type="entry name" value="Tape_meas_N"/>
</dbReference>
<dbReference type="NCBIfam" id="TIGR02675">
    <property type="entry name" value="tape_meas_nterm"/>
    <property type="match status" value="1"/>
</dbReference>
<dbReference type="PANTHER" id="PTHR37813">
    <property type="entry name" value="FELS-2 PROPHAGE PROTEIN"/>
    <property type="match status" value="1"/>
</dbReference>
<dbReference type="PANTHER" id="PTHR37813:SF1">
    <property type="entry name" value="FELS-2 PROPHAGE PROTEIN"/>
    <property type="match status" value="1"/>
</dbReference>
<dbReference type="Pfam" id="PF20155">
    <property type="entry name" value="TMP_3"/>
    <property type="match status" value="1"/>
</dbReference>
<protein>
    <recommendedName>
        <fullName evidence="2">Probable tape measure protein</fullName>
        <shortName evidence="2">TMP</shortName>
    </recommendedName>
    <alternativeName>
        <fullName evidence="3">Gene product 14</fullName>
        <shortName evidence="3">gp14</shortName>
    </alternativeName>
</protein>
<accession>D3WAD2</accession>
<evidence type="ECO:0000269" key="1">
    <source>
    </source>
</evidence>
<evidence type="ECO:0000303" key="2">
    <source>
    </source>
</evidence>
<evidence type="ECO:0000305" key="3"/>
<evidence type="ECO:0000305" key="4">
    <source>
    </source>
</evidence>
<comment type="function">
    <text evidence="4">Probable tape measure protein. Serves as a base for tail tube protein polymerization and acts as a template for tail length determination.</text>
</comment>
<comment type="subcellular location">
    <subcellularLocation>
        <location evidence="1">Virion</location>
    </subcellularLocation>
    <text evidence="1">Present inside the tail tube.</text>
</comment>
<comment type="similarity">
    <text evidence="3">Belongs to the skunalikevirus tape measure protein family.</text>
</comment>
<organismHost>
    <name type="scientific">Lactococcus lactis</name>
    <dbReference type="NCBI Taxonomy" id="1358"/>
</organismHost>
<name>TMP_BPLP2</name>
<proteinExistence type="evidence at protein level"/>